<proteinExistence type="inferred from homology"/>
<dbReference type="EMBL" id="CR382138">
    <property type="protein sequence ID" value="CAG88705.1"/>
    <property type="molecule type" value="Genomic_DNA"/>
</dbReference>
<dbReference type="RefSeq" id="XP_460401.1">
    <property type="nucleotide sequence ID" value="XM_460401.1"/>
</dbReference>
<dbReference type="SMR" id="Q6BN19"/>
<dbReference type="FunCoup" id="Q6BN19">
    <property type="interactions" value="43"/>
</dbReference>
<dbReference type="STRING" id="284592.Q6BN19"/>
<dbReference type="GeneID" id="2903796"/>
<dbReference type="KEGG" id="dha:DEHA2F00924g"/>
<dbReference type="VEuPathDB" id="FungiDB:DEHA2F00924g"/>
<dbReference type="eggNOG" id="ENOG502RGD3">
    <property type="taxonomic scope" value="Eukaryota"/>
</dbReference>
<dbReference type="HOGENOM" id="CLU_038840_0_1_1"/>
<dbReference type="InParanoid" id="Q6BN19"/>
<dbReference type="OMA" id="PMRNTNF"/>
<dbReference type="OrthoDB" id="18193at2759"/>
<dbReference type="Proteomes" id="UP000000599">
    <property type="component" value="Chromosome F"/>
</dbReference>
<dbReference type="GO" id="GO:0005739">
    <property type="term" value="C:mitochondrion"/>
    <property type="evidence" value="ECO:0007669"/>
    <property type="project" value="UniProtKB-SubCell"/>
</dbReference>
<dbReference type="GO" id="GO:0016872">
    <property type="term" value="F:intramolecular lyase activity"/>
    <property type="evidence" value="ECO:0007669"/>
    <property type="project" value="InterPro"/>
</dbReference>
<dbReference type="Gene3D" id="3.50.70.10">
    <property type="match status" value="1"/>
</dbReference>
<dbReference type="InterPro" id="IPR016087">
    <property type="entry name" value="Chalcone_isomerase"/>
</dbReference>
<dbReference type="InterPro" id="IPR016088">
    <property type="entry name" value="Chalcone_isomerase_3-sand"/>
</dbReference>
<dbReference type="InterPro" id="IPR036298">
    <property type="entry name" value="Chalcone_isomerase_sf"/>
</dbReference>
<dbReference type="PANTHER" id="PTHR47284">
    <property type="entry name" value="FATTY-ACID-BINDING PROTEIN 2"/>
    <property type="match status" value="1"/>
</dbReference>
<dbReference type="PANTHER" id="PTHR47284:SF3">
    <property type="entry name" value="FATTY-ACID-BINDING PROTEIN 2"/>
    <property type="match status" value="1"/>
</dbReference>
<dbReference type="Pfam" id="PF16035">
    <property type="entry name" value="Chalcone_2"/>
    <property type="match status" value="1"/>
</dbReference>
<dbReference type="SUPFAM" id="SSF54626">
    <property type="entry name" value="Chalcone isomerase"/>
    <property type="match status" value="1"/>
</dbReference>
<evidence type="ECO:0000250" key="1"/>
<evidence type="ECO:0000255" key="2"/>
<evidence type="ECO:0000305" key="3"/>
<sequence length="297" mass="33236">MFRSGFIHNTRFNFSKVTTKRLFSSSARPIHSLRIKSLTLGVCGFSAITGLALYNHRLIELDNKKQDISPNISIAVDSSISPFPTALISANQTNLNTDFQLLGYGVRSVTFVNFKVYGIGLYIANDDVNKTKKILSPNYLSTFGTENHSLRELLSDPEFSAQLISKLLEENVRFAVRISPVRNTDFNHLKDGLIKSILAHPESKENKEIVSNGLEELRNVFSGYRGSVPKNHVLWLEILKQGSLSISYENPVKNELTSMGQVKEPIISKLLFLQYLSGKKPLSEPLRKSCNDGFIGL</sequence>
<reference key="1">
    <citation type="journal article" date="2004" name="Nature">
        <title>Genome evolution in yeasts.</title>
        <authorList>
            <person name="Dujon B."/>
            <person name="Sherman D."/>
            <person name="Fischer G."/>
            <person name="Durrens P."/>
            <person name="Casaregola S."/>
            <person name="Lafontaine I."/>
            <person name="de Montigny J."/>
            <person name="Marck C."/>
            <person name="Neuveglise C."/>
            <person name="Talla E."/>
            <person name="Goffard N."/>
            <person name="Frangeul L."/>
            <person name="Aigle M."/>
            <person name="Anthouard V."/>
            <person name="Babour A."/>
            <person name="Barbe V."/>
            <person name="Barnay S."/>
            <person name="Blanchin S."/>
            <person name="Beckerich J.-M."/>
            <person name="Beyne E."/>
            <person name="Bleykasten C."/>
            <person name="Boisrame A."/>
            <person name="Boyer J."/>
            <person name="Cattolico L."/>
            <person name="Confanioleri F."/>
            <person name="de Daruvar A."/>
            <person name="Despons L."/>
            <person name="Fabre E."/>
            <person name="Fairhead C."/>
            <person name="Ferry-Dumazet H."/>
            <person name="Groppi A."/>
            <person name="Hantraye F."/>
            <person name="Hennequin C."/>
            <person name="Jauniaux N."/>
            <person name="Joyet P."/>
            <person name="Kachouri R."/>
            <person name="Kerrest A."/>
            <person name="Koszul R."/>
            <person name="Lemaire M."/>
            <person name="Lesur I."/>
            <person name="Ma L."/>
            <person name="Muller H."/>
            <person name="Nicaud J.-M."/>
            <person name="Nikolski M."/>
            <person name="Oztas S."/>
            <person name="Ozier-Kalogeropoulos O."/>
            <person name="Pellenz S."/>
            <person name="Potier S."/>
            <person name="Richard G.-F."/>
            <person name="Straub M.-L."/>
            <person name="Suleau A."/>
            <person name="Swennen D."/>
            <person name="Tekaia F."/>
            <person name="Wesolowski-Louvel M."/>
            <person name="Westhof E."/>
            <person name="Wirth B."/>
            <person name="Zeniou-Meyer M."/>
            <person name="Zivanovic Y."/>
            <person name="Bolotin-Fukuhara M."/>
            <person name="Thierry A."/>
            <person name="Bouchier C."/>
            <person name="Caudron B."/>
            <person name="Scarpelli C."/>
            <person name="Gaillardin C."/>
            <person name="Weissenbach J."/>
            <person name="Wincker P."/>
            <person name="Souciet J.-L."/>
        </authorList>
    </citation>
    <scope>NUCLEOTIDE SEQUENCE [LARGE SCALE GENOMIC DNA]</scope>
    <source>
        <strain>ATCC 36239 / CBS 767 / BCRC 21394 / JCM 1990 / NBRC 0083 / IGC 2968</strain>
    </source>
</reference>
<gene>
    <name type="primary">AIM18</name>
    <name type="synonym">FMP22</name>
    <name type="ordered locus">DEHA2F00924g</name>
</gene>
<keyword id="KW-0496">Mitochondrion</keyword>
<keyword id="KW-1185">Reference proteome</keyword>
<keyword id="KW-0809">Transit peptide</keyword>
<comment type="subcellular location">
    <subcellularLocation>
        <location evidence="1">Mitochondrion</location>
    </subcellularLocation>
</comment>
<comment type="similarity">
    <text evidence="3">Belongs to the AIM18/AIM46 family.</text>
</comment>
<organism>
    <name type="scientific">Debaryomyces hansenii (strain ATCC 36239 / CBS 767 / BCRC 21394 / JCM 1990 / NBRC 0083 / IGC 2968)</name>
    <name type="common">Yeast</name>
    <name type="synonym">Torulaspora hansenii</name>
    <dbReference type="NCBI Taxonomy" id="284592"/>
    <lineage>
        <taxon>Eukaryota</taxon>
        <taxon>Fungi</taxon>
        <taxon>Dikarya</taxon>
        <taxon>Ascomycota</taxon>
        <taxon>Saccharomycotina</taxon>
        <taxon>Pichiomycetes</taxon>
        <taxon>Debaryomycetaceae</taxon>
        <taxon>Debaryomyces</taxon>
    </lineage>
</organism>
<feature type="transit peptide" description="Mitochondrion" evidence="2">
    <location>
        <begin position="1"/>
        <end position="35"/>
    </location>
</feature>
<feature type="chain" id="PRO_0000399551" description="Altered inheritance of mitochondria protein 18, mitochondrial">
    <location>
        <begin position="36"/>
        <end position="297"/>
    </location>
</feature>
<protein>
    <recommendedName>
        <fullName>Altered inheritance of mitochondria protein 18, mitochondrial</fullName>
    </recommendedName>
</protein>
<name>AIM18_DEBHA</name>
<accession>Q6BN19</accession>